<feature type="chain" id="PRO_0000128323" description="T-complex protein 1 subunit gamma">
    <location>
        <begin position="1" status="less than"/>
        <end position="82" status="greater than"/>
    </location>
</feature>
<feature type="binding site" evidence="1">
    <location>
        <position position="15"/>
    </location>
    <ligand>
        <name>ADP</name>
        <dbReference type="ChEBI" id="CHEBI:456216"/>
    </ligand>
</feature>
<feature type="binding site" evidence="1">
    <location>
        <position position="15"/>
    </location>
    <ligand>
        <name>ATP</name>
        <dbReference type="ChEBI" id="CHEBI:30616"/>
    </ligand>
</feature>
<feature type="binding site" evidence="1">
    <location>
        <position position="66"/>
    </location>
    <ligand>
        <name>Mg(2+)</name>
        <dbReference type="ChEBI" id="CHEBI:18420"/>
    </ligand>
</feature>
<feature type="binding site" evidence="1">
    <location>
        <position position="67"/>
    </location>
    <ligand>
        <name>ADP</name>
        <dbReference type="ChEBI" id="CHEBI:456216"/>
    </ligand>
</feature>
<feature type="binding site" evidence="1">
    <location>
        <position position="67"/>
    </location>
    <ligand>
        <name>ATP</name>
        <dbReference type="ChEBI" id="CHEBI:30616"/>
    </ligand>
</feature>
<feature type="binding site" evidence="1">
    <location>
        <position position="68"/>
    </location>
    <ligand>
        <name>ADP</name>
        <dbReference type="ChEBI" id="CHEBI:456216"/>
    </ligand>
</feature>
<feature type="binding site" evidence="1">
    <location>
        <position position="68"/>
    </location>
    <ligand>
        <name>ATP</name>
        <dbReference type="ChEBI" id="CHEBI:30616"/>
    </ligand>
</feature>
<feature type="binding site" evidence="1">
    <location>
        <position position="69"/>
    </location>
    <ligand>
        <name>ADP</name>
        <dbReference type="ChEBI" id="CHEBI:456216"/>
    </ligand>
</feature>
<feature type="binding site" evidence="1">
    <location>
        <position position="69"/>
    </location>
    <ligand>
        <name>ATP</name>
        <dbReference type="ChEBI" id="CHEBI:30616"/>
    </ligand>
</feature>
<feature type="binding site" evidence="1">
    <location>
        <position position="70"/>
    </location>
    <ligand>
        <name>ADP</name>
        <dbReference type="ChEBI" id="CHEBI:456216"/>
    </ligand>
</feature>
<feature type="non-terminal residue">
    <location>
        <position position="1"/>
    </location>
</feature>
<feature type="non-terminal residue">
    <location>
        <position position="82"/>
    </location>
</feature>
<dbReference type="EC" id="3.6.1.-" evidence="1"/>
<dbReference type="EMBL" id="L47772">
    <property type="protein sequence ID" value="AAA79024.1"/>
    <property type="molecule type" value="mRNA"/>
</dbReference>
<dbReference type="SMR" id="Q29068"/>
<dbReference type="STRING" id="9823.ENSSSCP00000045371"/>
<dbReference type="PeptideAtlas" id="Q29068"/>
<dbReference type="InParanoid" id="Q29068"/>
<dbReference type="Proteomes" id="UP000008227">
    <property type="component" value="Unplaced"/>
</dbReference>
<dbReference type="Proteomes" id="UP000314985">
    <property type="component" value="Unplaced"/>
</dbReference>
<dbReference type="Proteomes" id="UP000694570">
    <property type="component" value="Unplaced"/>
</dbReference>
<dbReference type="Proteomes" id="UP000694571">
    <property type="component" value="Unplaced"/>
</dbReference>
<dbReference type="Proteomes" id="UP000694720">
    <property type="component" value="Unplaced"/>
</dbReference>
<dbReference type="Proteomes" id="UP000694722">
    <property type="component" value="Unplaced"/>
</dbReference>
<dbReference type="Proteomes" id="UP000694723">
    <property type="component" value="Unplaced"/>
</dbReference>
<dbReference type="Proteomes" id="UP000694724">
    <property type="component" value="Unplaced"/>
</dbReference>
<dbReference type="Proteomes" id="UP000694725">
    <property type="component" value="Unplaced"/>
</dbReference>
<dbReference type="Proteomes" id="UP000694726">
    <property type="component" value="Unplaced"/>
</dbReference>
<dbReference type="Proteomes" id="UP000694727">
    <property type="component" value="Unplaced"/>
</dbReference>
<dbReference type="Proteomes" id="UP000694728">
    <property type="component" value="Unplaced"/>
</dbReference>
<dbReference type="GO" id="GO:0005832">
    <property type="term" value="C:chaperonin-containing T-complex"/>
    <property type="evidence" value="ECO:0000250"/>
    <property type="project" value="UniProtKB"/>
</dbReference>
<dbReference type="GO" id="GO:0005524">
    <property type="term" value="F:ATP binding"/>
    <property type="evidence" value="ECO:0007669"/>
    <property type="project" value="UniProtKB-KW"/>
</dbReference>
<dbReference type="GO" id="GO:0016887">
    <property type="term" value="F:ATP hydrolysis activity"/>
    <property type="evidence" value="ECO:0007669"/>
    <property type="project" value="InterPro"/>
</dbReference>
<dbReference type="GO" id="GO:0140662">
    <property type="term" value="F:ATP-dependent protein folding chaperone"/>
    <property type="evidence" value="ECO:0007669"/>
    <property type="project" value="InterPro"/>
</dbReference>
<dbReference type="GO" id="GO:0051082">
    <property type="term" value="F:unfolded protein binding"/>
    <property type="evidence" value="ECO:0007669"/>
    <property type="project" value="InterPro"/>
</dbReference>
<dbReference type="FunFam" id="1.10.560.10:FF:000085">
    <property type="entry name" value="T-complex protein 1 subunit gamma"/>
    <property type="match status" value="1"/>
</dbReference>
<dbReference type="Gene3D" id="1.10.560.10">
    <property type="entry name" value="GroEL-like equatorial domain"/>
    <property type="match status" value="1"/>
</dbReference>
<dbReference type="InterPro" id="IPR017998">
    <property type="entry name" value="Chaperone_TCP-1"/>
</dbReference>
<dbReference type="InterPro" id="IPR002194">
    <property type="entry name" value="Chaperonin_TCP-1_CS"/>
</dbReference>
<dbReference type="InterPro" id="IPR002423">
    <property type="entry name" value="Cpn60/GroEL/TCP-1"/>
</dbReference>
<dbReference type="InterPro" id="IPR027413">
    <property type="entry name" value="GROEL-like_equatorial_sf"/>
</dbReference>
<dbReference type="PANTHER" id="PTHR11353">
    <property type="entry name" value="CHAPERONIN"/>
    <property type="match status" value="1"/>
</dbReference>
<dbReference type="Pfam" id="PF00118">
    <property type="entry name" value="Cpn60_TCP1"/>
    <property type="match status" value="1"/>
</dbReference>
<dbReference type="PRINTS" id="PR00304">
    <property type="entry name" value="TCOMPLEXTCP1"/>
</dbReference>
<dbReference type="SUPFAM" id="SSF48592">
    <property type="entry name" value="GroEL equatorial domain-like"/>
    <property type="match status" value="1"/>
</dbReference>
<dbReference type="PROSITE" id="PS00750">
    <property type="entry name" value="TCP1_1"/>
    <property type="match status" value="1"/>
</dbReference>
<dbReference type="PROSITE" id="PS00751">
    <property type="entry name" value="TCP1_2"/>
    <property type="match status" value="1"/>
</dbReference>
<dbReference type="PROSITE" id="PS00995">
    <property type="entry name" value="TCP1_3"/>
    <property type="match status" value="1"/>
</dbReference>
<gene>
    <name type="primary">CCT3</name>
    <name type="synonym">CCTG</name>
</gene>
<evidence type="ECO:0000250" key="1">
    <source>
        <dbReference type="UniProtKB" id="P49368"/>
    </source>
</evidence>
<evidence type="ECO:0000250" key="2">
    <source>
        <dbReference type="UniProtKB" id="P80318"/>
    </source>
</evidence>
<evidence type="ECO:0000305" key="3"/>
<sequence>NAAKTIADIIRTCLGPKSMMKMLLDPMGGIVMTNDGNAILREIQVQHPAAKSMIEISRTQDEEVGDGTTSVIILAGEMLSVA</sequence>
<protein>
    <recommendedName>
        <fullName>T-complex protein 1 subunit gamma</fullName>
        <shortName>TCP-1-gamma</shortName>
        <ecNumber evidence="1">3.6.1.-</ecNumber>
    </recommendedName>
    <alternativeName>
        <fullName>CCT-gamma</fullName>
    </alternativeName>
    <alternativeName>
        <fullName>Matricin</fullName>
    </alternativeName>
</protein>
<accession>Q29068</accession>
<proteinExistence type="evidence at transcript level"/>
<comment type="function">
    <text evidence="1">Component of the chaperonin-containing T-complex (TRiC), a molecular chaperone complex that assists the folding of actin, tubulin and other proteins upon ATP hydrolysis. The TRiC complex mediates the folding of WRAP53/TCAB1, thereby regulating telomere maintenance. As part of the TRiC complex may play a role in the assembly of BBSome, a complex involved in ciliogenesis regulating transports vesicles to the cilia.</text>
</comment>
<comment type="catalytic activity">
    <reaction evidence="1">
        <text>ATP + H2O = ADP + phosphate + H(+)</text>
        <dbReference type="Rhea" id="RHEA:13065"/>
        <dbReference type="ChEBI" id="CHEBI:15377"/>
        <dbReference type="ChEBI" id="CHEBI:15378"/>
        <dbReference type="ChEBI" id="CHEBI:30616"/>
        <dbReference type="ChEBI" id="CHEBI:43474"/>
        <dbReference type="ChEBI" id="CHEBI:456216"/>
    </reaction>
</comment>
<comment type="subunit">
    <text evidence="1 2">Component of the chaperonin-containing T-complex (TRiC), a hexadecamer composed of two identical back-to-back stacked rings enclosing a protein folding chamber. Each ring is made up of eight different subunits: TCP1/CCT1, CCT2, CCT3, CCT4, CCT5, CCT6A/CCT6, CCT7, CCT8. Interacts with PACRG (By similarity). Interacts with DNAAF4 (By similarity). Interacts with DLEC1 (By similarity).</text>
</comment>
<comment type="subcellular location">
    <subcellularLocation>
        <location evidence="3">Cytoplasm</location>
    </subcellularLocation>
</comment>
<comment type="similarity">
    <text evidence="3">Belongs to the TCP-1 chaperonin family.</text>
</comment>
<name>TCPG_PIG</name>
<reference key="1">
    <citation type="submission" date="1995-10" db="EMBL/GenBank/DDBJ databases">
        <title>Partial cDNA encoding a TCP-1 related protein expressed in day 17 porcine embryo.</title>
        <authorList>
            <person name="Anderson J.E."/>
            <person name="Matteri R.L."/>
            <person name="Prather R.S."/>
        </authorList>
    </citation>
    <scope>NUCLEOTIDE SEQUENCE [MRNA]</scope>
</reference>
<keyword id="KW-0067">ATP-binding</keyword>
<keyword id="KW-0143">Chaperone</keyword>
<keyword id="KW-0963">Cytoplasm</keyword>
<keyword id="KW-0378">Hydrolase</keyword>
<keyword id="KW-0460">Magnesium</keyword>
<keyword id="KW-0479">Metal-binding</keyword>
<keyword id="KW-0547">Nucleotide-binding</keyword>
<keyword id="KW-1185">Reference proteome</keyword>
<organism>
    <name type="scientific">Sus scrofa</name>
    <name type="common">Pig</name>
    <dbReference type="NCBI Taxonomy" id="9823"/>
    <lineage>
        <taxon>Eukaryota</taxon>
        <taxon>Metazoa</taxon>
        <taxon>Chordata</taxon>
        <taxon>Craniata</taxon>
        <taxon>Vertebrata</taxon>
        <taxon>Euteleostomi</taxon>
        <taxon>Mammalia</taxon>
        <taxon>Eutheria</taxon>
        <taxon>Laurasiatheria</taxon>
        <taxon>Artiodactyla</taxon>
        <taxon>Suina</taxon>
        <taxon>Suidae</taxon>
        <taxon>Sus</taxon>
    </lineage>
</organism>